<evidence type="ECO:0000255" key="1">
    <source>
        <dbReference type="HAMAP-Rule" id="MF_00361"/>
    </source>
</evidence>
<organism>
    <name type="scientific">Gloeobacter violaceus (strain ATCC 29082 / PCC 7421)</name>
    <dbReference type="NCBI Taxonomy" id="251221"/>
    <lineage>
        <taxon>Bacteria</taxon>
        <taxon>Bacillati</taxon>
        <taxon>Cyanobacteriota</taxon>
        <taxon>Cyanophyceae</taxon>
        <taxon>Gloeobacterales</taxon>
        <taxon>Gloeobacteraceae</taxon>
        <taxon>Gloeobacter</taxon>
    </lineage>
</organism>
<accession>Q7NFK0</accession>
<protein>
    <recommendedName>
        <fullName evidence="1">NAD kinase 2</fullName>
        <ecNumber evidence="1">2.7.1.23</ecNumber>
    </recommendedName>
    <alternativeName>
        <fullName evidence="1">ATP-dependent NAD kinase 2</fullName>
    </alternativeName>
</protein>
<proteinExistence type="inferred from homology"/>
<gene>
    <name evidence="1" type="primary">nadK2</name>
    <name type="ordered locus">gll3525</name>
</gene>
<dbReference type="EC" id="2.7.1.23" evidence="1"/>
<dbReference type="EMBL" id="BA000045">
    <property type="protein sequence ID" value="BAC91466.1"/>
    <property type="molecule type" value="Genomic_DNA"/>
</dbReference>
<dbReference type="RefSeq" id="NP_926471.1">
    <property type="nucleotide sequence ID" value="NC_005125.1"/>
</dbReference>
<dbReference type="RefSeq" id="WP_011143514.1">
    <property type="nucleotide sequence ID" value="NC_005125.1"/>
</dbReference>
<dbReference type="SMR" id="Q7NFK0"/>
<dbReference type="FunCoup" id="Q7NFK0">
    <property type="interactions" value="160"/>
</dbReference>
<dbReference type="STRING" id="251221.gene:10761038"/>
<dbReference type="EnsemblBacteria" id="BAC91466">
    <property type="protein sequence ID" value="BAC91466"/>
    <property type="gene ID" value="BAC91466"/>
</dbReference>
<dbReference type="KEGG" id="gvi:gll3525"/>
<dbReference type="PATRIC" id="fig|251221.4.peg.3558"/>
<dbReference type="eggNOG" id="COG0061">
    <property type="taxonomic scope" value="Bacteria"/>
</dbReference>
<dbReference type="HOGENOM" id="CLU_008831_0_1_3"/>
<dbReference type="InParanoid" id="Q7NFK0"/>
<dbReference type="OrthoDB" id="9774737at2"/>
<dbReference type="PhylomeDB" id="Q7NFK0"/>
<dbReference type="Proteomes" id="UP000000557">
    <property type="component" value="Chromosome"/>
</dbReference>
<dbReference type="GO" id="GO:0005737">
    <property type="term" value="C:cytoplasm"/>
    <property type="evidence" value="ECO:0007669"/>
    <property type="project" value="UniProtKB-SubCell"/>
</dbReference>
<dbReference type="GO" id="GO:0005524">
    <property type="term" value="F:ATP binding"/>
    <property type="evidence" value="ECO:0007669"/>
    <property type="project" value="UniProtKB-KW"/>
</dbReference>
<dbReference type="GO" id="GO:0046872">
    <property type="term" value="F:metal ion binding"/>
    <property type="evidence" value="ECO:0007669"/>
    <property type="project" value="UniProtKB-UniRule"/>
</dbReference>
<dbReference type="GO" id="GO:0051287">
    <property type="term" value="F:NAD binding"/>
    <property type="evidence" value="ECO:0007669"/>
    <property type="project" value="UniProtKB-ARBA"/>
</dbReference>
<dbReference type="GO" id="GO:0003951">
    <property type="term" value="F:NAD+ kinase activity"/>
    <property type="evidence" value="ECO:0000318"/>
    <property type="project" value="GO_Central"/>
</dbReference>
<dbReference type="GO" id="GO:0019674">
    <property type="term" value="P:NAD metabolic process"/>
    <property type="evidence" value="ECO:0007669"/>
    <property type="project" value="InterPro"/>
</dbReference>
<dbReference type="GO" id="GO:0006741">
    <property type="term" value="P:NADP biosynthetic process"/>
    <property type="evidence" value="ECO:0000318"/>
    <property type="project" value="GO_Central"/>
</dbReference>
<dbReference type="Gene3D" id="3.40.50.10330">
    <property type="entry name" value="Probable inorganic polyphosphate/atp-NAD kinase, domain 1"/>
    <property type="match status" value="1"/>
</dbReference>
<dbReference type="Gene3D" id="2.60.200.30">
    <property type="entry name" value="Probable inorganic polyphosphate/atp-NAD kinase, domain 2"/>
    <property type="match status" value="1"/>
</dbReference>
<dbReference type="HAMAP" id="MF_00361">
    <property type="entry name" value="NAD_kinase"/>
    <property type="match status" value="1"/>
</dbReference>
<dbReference type="InterPro" id="IPR017438">
    <property type="entry name" value="ATP-NAD_kinase_N"/>
</dbReference>
<dbReference type="InterPro" id="IPR017437">
    <property type="entry name" value="ATP-NAD_kinase_PpnK-typ_C"/>
</dbReference>
<dbReference type="InterPro" id="IPR016064">
    <property type="entry name" value="NAD/diacylglycerol_kinase_sf"/>
</dbReference>
<dbReference type="InterPro" id="IPR002504">
    <property type="entry name" value="NADK"/>
</dbReference>
<dbReference type="NCBIfam" id="NF002732">
    <property type="entry name" value="PRK02649.1"/>
    <property type="match status" value="1"/>
</dbReference>
<dbReference type="PANTHER" id="PTHR20275">
    <property type="entry name" value="NAD KINASE"/>
    <property type="match status" value="1"/>
</dbReference>
<dbReference type="PANTHER" id="PTHR20275:SF13">
    <property type="entry name" value="NAD KINASE 2"/>
    <property type="match status" value="1"/>
</dbReference>
<dbReference type="Pfam" id="PF01513">
    <property type="entry name" value="NAD_kinase"/>
    <property type="match status" value="1"/>
</dbReference>
<dbReference type="Pfam" id="PF20143">
    <property type="entry name" value="NAD_kinase_C"/>
    <property type="match status" value="1"/>
</dbReference>
<dbReference type="SUPFAM" id="SSF111331">
    <property type="entry name" value="NAD kinase/diacylglycerol kinase-like"/>
    <property type="match status" value="1"/>
</dbReference>
<reference key="1">
    <citation type="journal article" date="2003" name="DNA Res.">
        <title>Complete genome structure of Gloeobacter violaceus PCC 7421, a cyanobacterium that lacks thylakoids.</title>
        <authorList>
            <person name="Nakamura Y."/>
            <person name="Kaneko T."/>
            <person name="Sato S."/>
            <person name="Mimuro M."/>
            <person name="Miyashita H."/>
            <person name="Tsuchiya T."/>
            <person name="Sasamoto S."/>
            <person name="Watanabe A."/>
            <person name="Kawashima K."/>
            <person name="Kishida Y."/>
            <person name="Kiyokawa C."/>
            <person name="Kohara M."/>
            <person name="Matsumoto M."/>
            <person name="Matsuno A."/>
            <person name="Nakazaki N."/>
            <person name="Shimpo S."/>
            <person name="Takeuchi C."/>
            <person name="Yamada M."/>
            <person name="Tabata S."/>
        </authorList>
    </citation>
    <scope>NUCLEOTIDE SEQUENCE [LARGE SCALE GENOMIC DNA]</scope>
    <source>
        <strain>ATCC 29082 / PCC 7421</strain>
    </source>
</reference>
<keyword id="KW-0067">ATP-binding</keyword>
<keyword id="KW-0963">Cytoplasm</keyword>
<keyword id="KW-0418">Kinase</keyword>
<keyword id="KW-0520">NAD</keyword>
<keyword id="KW-0521">NADP</keyword>
<keyword id="KW-0547">Nucleotide-binding</keyword>
<keyword id="KW-1185">Reference proteome</keyword>
<keyword id="KW-0808">Transferase</keyword>
<name>NADK2_GLOVI</name>
<sequence length="309" mass="33606">MMALPKAGIIFNDIKPAAARAAAELTEKFQDAGYRVYQTTGWGGILGFPRPDSPVCHTPIDRLAAEGFDEAMPFAIVLGGDGTVLAAARQVAPFDIPLLTINTGHMGFLTEGYLNQIHPAIDTLLAGQYALEDRSMIEVRVFRDERLIWEALALNEAVLHKEPLSGICHFEVAIGRHNIVDIAADGVIVATPTGSTAYALSAGGPVITPDVQVLQLIPICPHSLAARGLVFADTESLVVHPPTNHQHLILSLDGNSGCYIWPGDQVRIRRARYRTRLIRLQPPEFFALLREKLGWGLPHIAKPLSVELP</sequence>
<comment type="function">
    <text evidence="1">Involved in the regulation of the intracellular balance of NAD and NADP, and is a key enzyme in the biosynthesis of NADP. Catalyzes specifically the phosphorylation on 2'-hydroxyl of the adenosine moiety of NAD to yield NADP.</text>
</comment>
<comment type="catalytic activity">
    <reaction evidence="1">
        <text>NAD(+) + ATP = ADP + NADP(+) + H(+)</text>
        <dbReference type="Rhea" id="RHEA:18629"/>
        <dbReference type="ChEBI" id="CHEBI:15378"/>
        <dbReference type="ChEBI" id="CHEBI:30616"/>
        <dbReference type="ChEBI" id="CHEBI:57540"/>
        <dbReference type="ChEBI" id="CHEBI:58349"/>
        <dbReference type="ChEBI" id="CHEBI:456216"/>
        <dbReference type="EC" id="2.7.1.23"/>
    </reaction>
</comment>
<comment type="cofactor">
    <cofactor evidence="1">
        <name>a divalent metal cation</name>
        <dbReference type="ChEBI" id="CHEBI:60240"/>
    </cofactor>
</comment>
<comment type="subcellular location">
    <subcellularLocation>
        <location evidence="1">Cytoplasm</location>
    </subcellularLocation>
</comment>
<comment type="similarity">
    <text evidence="1">Belongs to the NAD kinase family.</text>
</comment>
<feature type="chain" id="PRO_0000229642" description="NAD kinase 2">
    <location>
        <begin position="1"/>
        <end position="309"/>
    </location>
</feature>
<feature type="active site" description="Proton acceptor" evidence="1">
    <location>
        <position position="81"/>
    </location>
</feature>
<feature type="binding site" evidence="1">
    <location>
        <begin position="81"/>
        <end position="82"/>
    </location>
    <ligand>
        <name>NAD(+)</name>
        <dbReference type="ChEBI" id="CHEBI:57540"/>
    </ligand>
</feature>
<feature type="binding site" evidence="1">
    <location>
        <begin position="155"/>
        <end position="156"/>
    </location>
    <ligand>
        <name>NAD(+)</name>
        <dbReference type="ChEBI" id="CHEBI:57540"/>
    </ligand>
</feature>
<feature type="binding site" evidence="1">
    <location>
        <position position="185"/>
    </location>
    <ligand>
        <name>NAD(+)</name>
        <dbReference type="ChEBI" id="CHEBI:57540"/>
    </ligand>
</feature>
<feature type="binding site" evidence="1">
    <location>
        <begin position="196"/>
        <end position="201"/>
    </location>
    <ligand>
        <name>NAD(+)</name>
        <dbReference type="ChEBI" id="CHEBI:57540"/>
    </ligand>
</feature>
<feature type="binding site" evidence="1">
    <location>
        <position position="255"/>
    </location>
    <ligand>
        <name>NAD(+)</name>
        <dbReference type="ChEBI" id="CHEBI:57540"/>
    </ligand>
</feature>